<sequence>MKVSVLITLAVLGVMFLLTSAEERGSDQMDSPAWLKSMERIFQSEERECRWLFGGCEKDSDCCEHLGCRRAKPSWCGWDFTVGK</sequence>
<dbReference type="EMBL" id="EU233894">
    <property type="protein sequence ID" value="ABY71713.1"/>
    <property type="molecule type" value="mRNA"/>
</dbReference>
<dbReference type="SMR" id="B1P1G3"/>
<dbReference type="ArachnoServer" id="AS000839">
    <property type="toxin name" value="U21-theraphotoxin-Cg1a"/>
</dbReference>
<dbReference type="GO" id="GO:0005576">
    <property type="term" value="C:extracellular region"/>
    <property type="evidence" value="ECO:0007669"/>
    <property type="project" value="UniProtKB-SubCell"/>
</dbReference>
<dbReference type="GO" id="GO:0008200">
    <property type="term" value="F:ion channel inhibitor activity"/>
    <property type="evidence" value="ECO:0007669"/>
    <property type="project" value="InterPro"/>
</dbReference>
<dbReference type="GO" id="GO:0090729">
    <property type="term" value="F:toxin activity"/>
    <property type="evidence" value="ECO:0007669"/>
    <property type="project" value="UniProtKB-KW"/>
</dbReference>
<dbReference type="InterPro" id="IPR011696">
    <property type="entry name" value="Huwentoxin-1"/>
</dbReference>
<dbReference type="Pfam" id="PF07740">
    <property type="entry name" value="Toxin_12"/>
    <property type="match status" value="1"/>
</dbReference>
<dbReference type="SUPFAM" id="SSF57059">
    <property type="entry name" value="omega toxin-like"/>
    <property type="match status" value="1"/>
</dbReference>
<proteinExistence type="evidence at protein level"/>
<comment type="function">
    <text>Probable ion channel inhibitor.</text>
</comment>
<comment type="subcellular location">
    <subcellularLocation>
        <location>Secreted</location>
    </subcellularLocation>
</comment>
<comment type="tissue specificity">
    <text>Expressed by the venom gland.</text>
</comment>
<comment type="domain">
    <text evidence="1">The presence of a 'disulfide through disulfide knot' structurally defines this protein as a knottin.</text>
</comment>
<comment type="mass spectrometry">
    <text>Monoisotopic mass.</text>
</comment>
<comment type="similarity">
    <text evidence="4">Belongs to the neurotoxin 10 (Hwtx-1) family. 05 (F4a) subfamily.</text>
</comment>
<organism>
    <name type="scientific">Chilobrachys guangxiensis</name>
    <name type="common">Chinese earth tiger tarantula</name>
    <name type="synonym">Chilobrachys jingzhao</name>
    <dbReference type="NCBI Taxonomy" id="278060"/>
    <lineage>
        <taxon>Eukaryota</taxon>
        <taxon>Metazoa</taxon>
        <taxon>Ecdysozoa</taxon>
        <taxon>Arthropoda</taxon>
        <taxon>Chelicerata</taxon>
        <taxon>Arachnida</taxon>
        <taxon>Araneae</taxon>
        <taxon>Mygalomorphae</taxon>
        <taxon>Theraphosidae</taxon>
        <taxon>Chilobrachys</taxon>
    </lineage>
</organism>
<feature type="signal peptide" evidence="2">
    <location>
        <begin position="1"/>
        <end position="21"/>
    </location>
</feature>
<feature type="propeptide" id="PRO_0000398483" evidence="3">
    <location>
        <begin position="22"/>
        <end position="47"/>
    </location>
</feature>
<feature type="peptide" id="PRO_0000398484" description="U21-theraphotoxin-Cg1a 3">
    <location>
        <begin position="48"/>
        <end position="82"/>
    </location>
</feature>
<feature type="modified residue" description="Valine amide" evidence="3">
    <location>
        <position position="82"/>
    </location>
</feature>
<feature type="disulfide bond" evidence="1">
    <location>
        <begin position="49"/>
        <end position="63"/>
    </location>
</feature>
<feature type="disulfide bond" evidence="1">
    <location>
        <begin position="56"/>
        <end position="68"/>
    </location>
</feature>
<feature type="disulfide bond" evidence="1">
    <location>
        <begin position="62"/>
        <end position="76"/>
    </location>
</feature>
<protein>
    <recommendedName>
        <fullName>U21-theraphotoxin-Cg1a 3</fullName>
        <shortName>U21-TRTX-Cg1a</shortName>
    </recommendedName>
    <alternativeName>
        <fullName>Jingzhaotoxin-38.3</fullName>
        <shortName>JZTX-38.3</shortName>
    </alternativeName>
    <alternativeName>
        <fullName>Peptide F4-25.19</fullName>
    </alternativeName>
</protein>
<reference key="1">
    <citation type="journal article" date="2008" name="Cell. Mol. Life Sci.">
        <title>Molecular diversity and evolution of cystine knot toxins of the tarantula Chilobrachys jingzhao.</title>
        <authorList>
            <person name="Chen J."/>
            <person name="Deng M."/>
            <person name="He Q."/>
            <person name="Meng E."/>
            <person name="Jiang L."/>
            <person name="Liao Z."/>
            <person name="Rong M."/>
            <person name="Liang S."/>
        </authorList>
    </citation>
    <scope>NUCLEOTIDE SEQUENCE [LARGE SCALE MRNA]</scope>
    <source>
        <tissue>Venom gland</tissue>
    </source>
</reference>
<reference key="2">
    <citation type="journal article" date="2007" name="Proteomics">
        <title>Proteomic and peptidomic analysis of the venom from Chinese tarantula Chilobrachys jingzhao.</title>
        <authorList>
            <person name="Liao Z."/>
            <person name="Cao J."/>
            <person name="Li S."/>
            <person name="Yan X."/>
            <person name="Hu W."/>
            <person name="He Q."/>
            <person name="Chen J."/>
            <person name="Tang J."/>
            <person name="Xie J."/>
            <person name="Liang S."/>
        </authorList>
    </citation>
    <scope>PROTEIN SEQUENCE OF 48-82</scope>
    <scope>MASS SPECTROMETRY</scope>
    <scope>AMIDATION AT VAL-82</scope>
    <source>
        <tissue>Venom</tissue>
    </source>
</reference>
<accession>B1P1G3</accession>
<name>JZ38C_CHIGU</name>
<evidence type="ECO:0000250" key="1">
    <source>
        <dbReference type="UniProtKB" id="P0C247"/>
    </source>
</evidence>
<evidence type="ECO:0000255" key="2"/>
<evidence type="ECO:0000269" key="3">
    <source>
    </source>
</evidence>
<evidence type="ECO:0000305" key="4"/>
<keyword id="KW-0027">Amidation</keyword>
<keyword id="KW-0903">Direct protein sequencing</keyword>
<keyword id="KW-1015">Disulfide bond</keyword>
<keyword id="KW-0872">Ion channel impairing toxin</keyword>
<keyword id="KW-0960">Knottin</keyword>
<keyword id="KW-0964">Secreted</keyword>
<keyword id="KW-0732">Signal</keyword>
<keyword id="KW-0800">Toxin</keyword>